<evidence type="ECO:0000255" key="1">
    <source>
        <dbReference type="HAMAP-Rule" id="MF_00181"/>
    </source>
</evidence>
<gene>
    <name evidence="1" type="primary">pepA</name>
    <name type="ordered locus">BCB4264_A5057</name>
</gene>
<accession>B7HBG1</accession>
<sequence length="494" mass="53523">MFQVQKELAGHEAVIIALFEEEKMSSFVQELDKAFEGQLQVLLEEKELSTKKKAISKVHSLGKTNVKRYYFVGLGKKESYTTETLRAALGKAFKTLQAAKVQDAAMLLDSFVTEKLDAIDVAHIAAEVQGLGTYELQTYKSDKKDCVELEKFTAITAEDAQEIEAALTVGYVHGRATNSARTLVNMPPNVLTATKLAEYAVELAEKYDMDYKVLEKEEMEDLGMGALLAVNQGSVEPPKMIALIYKGKEEWTDVIGFVGKGITYDTGGYSLKPREGMVGMKGDMGGAAAVLGAMEIIGELRPEQNVIAVIPSTDNVVSGTAFKPDDVITSMSGKTIEVLNTDAEGRLALADGITYAKKLGANYLVDVATLTGGVIVALGNYTTGAMTNNEELFEQVLEASMETDEPIWQLPIFDRDKERVRNSKFADLNNSPGREGHAVMAGTFLGEFAEDTPWVHLDIAGTSETKGAHDLGPAGATGAMVRTLATLVERFGEE</sequence>
<name>AMPA_BACC4</name>
<comment type="function">
    <text evidence="1">Presumably involved in the processing and regular turnover of intracellular proteins. Catalyzes the removal of unsubstituted N-terminal amino acids from various peptides.</text>
</comment>
<comment type="catalytic activity">
    <reaction evidence="1">
        <text>Release of an N-terminal amino acid, Xaa-|-Yaa-, in which Xaa is preferably Leu, but may be other amino acids including Pro although not Arg or Lys, and Yaa may be Pro. Amino acid amides and methyl esters are also readily hydrolyzed, but rates on arylamides are exceedingly low.</text>
        <dbReference type="EC" id="3.4.11.1"/>
    </reaction>
</comment>
<comment type="catalytic activity">
    <reaction evidence="1">
        <text>Release of an N-terminal amino acid, preferentially leucine, but not glutamic or aspartic acids.</text>
        <dbReference type="EC" id="3.4.11.10"/>
    </reaction>
</comment>
<comment type="cofactor">
    <cofactor evidence="1">
        <name>Mn(2+)</name>
        <dbReference type="ChEBI" id="CHEBI:29035"/>
    </cofactor>
    <text evidence="1">Binds 2 manganese ions per subunit.</text>
</comment>
<comment type="subcellular location">
    <subcellularLocation>
        <location evidence="1">Cytoplasm</location>
    </subcellularLocation>
</comment>
<comment type="similarity">
    <text evidence="1">Belongs to the peptidase M17 family.</text>
</comment>
<dbReference type="EC" id="3.4.11.1" evidence="1"/>
<dbReference type="EC" id="3.4.11.10" evidence="1"/>
<dbReference type="EMBL" id="CP001176">
    <property type="protein sequence ID" value="ACK62245.1"/>
    <property type="molecule type" value="Genomic_DNA"/>
</dbReference>
<dbReference type="RefSeq" id="WP_000487941.1">
    <property type="nucleotide sequence ID" value="NC_011725.1"/>
</dbReference>
<dbReference type="SMR" id="B7HBG1"/>
<dbReference type="MEROPS" id="M17.010"/>
<dbReference type="KEGG" id="bcb:BCB4264_A5057"/>
<dbReference type="HOGENOM" id="CLU_013734_6_0_9"/>
<dbReference type="Proteomes" id="UP000007096">
    <property type="component" value="Chromosome"/>
</dbReference>
<dbReference type="GO" id="GO:0005737">
    <property type="term" value="C:cytoplasm"/>
    <property type="evidence" value="ECO:0007669"/>
    <property type="project" value="UniProtKB-SubCell"/>
</dbReference>
<dbReference type="GO" id="GO:0030145">
    <property type="term" value="F:manganese ion binding"/>
    <property type="evidence" value="ECO:0007669"/>
    <property type="project" value="UniProtKB-UniRule"/>
</dbReference>
<dbReference type="GO" id="GO:0070006">
    <property type="term" value="F:metalloaminopeptidase activity"/>
    <property type="evidence" value="ECO:0007669"/>
    <property type="project" value="InterPro"/>
</dbReference>
<dbReference type="GO" id="GO:0006508">
    <property type="term" value="P:proteolysis"/>
    <property type="evidence" value="ECO:0007669"/>
    <property type="project" value="UniProtKB-KW"/>
</dbReference>
<dbReference type="CDD" id="cd00433">
    <property type="entry name" value="Peptidase_M17"/>
    <property type="match status" value="1"/>
</dbReference>
<dbReference type="Gene3D" id="3.40.220.10">
    <property type="entry name" value="Leucine Aminopeptidase, subunit E, domain 1"/>
    <property type="match status" value="1"/>
</dbReference>
<dbReference type="Gene3D" id="3.40.630.10">
    <property type="entry name" value="Zn peptidases"/>
    <property type="match status" value="1"/>
</dbReference>
<dbReference type="HAMAP" id="MF_00181">
    <property type="entry name" value="Cytosol_peptidase_M17"/>
    <property type="match status" value="1"/>
</dbReference>
<dbReference type="InterPro" id="IPR011356">
    <property type="entry name" value="Leucine_aapep/pepB"/>
</dbReference>
<dbReference type="InterPro" id="IPR043472">
    <property type="entry name" value="Macro_dom-like"/>
</dbReference>
<dbReference type="InterPro" id="IPR000819">
    <property type="entry name" value="Peptidase_M17_C"/>
</dbReference>
<dbReference type="InterPro" id="IPR023042">
    <property type="entry name" value="Peptidase_M17_leu_NH2_pept"/>
</dbReference>
<dbReference type="InterPro" id="IPR008283">
    <property type="entry name" value="Peptidase_M17_N"/>
</dbReference>
<dbReference type="NCBIfam" id="NF002073">
    <property type="entry name" value="PRK00913.1-2"/>
    <property type="match status" value="1"/>
</dbReference>
<dbReference type="NCBIfam" id="NF002074">
    <property type="entry name" value="PRK00913.1-4"/>
    <property type="match status" value="1"/>
</dbReference>
<dbReference type="NCBIfam" id="NF002083">
    <property type="entry name" value="PRK00913.3-5"/>
    <property type="match status" value="1"/>
</dbReference>
<dbReference type="PANTHER" id="PTHR11963:SF23">
    <property type="entry name" value="CYTOSOL AMINOPEPTIDASE"/>
    <property type="match status" value="1"/>
</dbReference>
<dbReference type="PANTHER" id="PTHR11963">
    <property type="entry name" value="LEUCINE AMINOPEPTIDASE-RELATED"/>
    <property type="match status" value="1"/>
</dbReference>
<dbReference type="Pfam" id="PF00883">
    <property type="entry name" value="Peptidase_M17"/>
    <property type="match status" value="1"/>
</dbReference>
<dbReference type="Pfam" id="PF02789">
    <property type="entry name" value="Peptidase_M17_N"/>
    <property type="match status" value="1"/>
</dbReference>
<dbReference type="PRINTS" id="PR00481">
    <property type="entry name" value="LAMNOPPTDASE"/>
</dbReference>
<dbReference type="SUPFAM" id="SSF52949">
    <property type="entry name" value="Macro domain-like"/>
    <property type="match status" value="1"/>
</dbReference>
<dbReference type="SUPFAM" id="SSF53187">
    <property type="entry name" value="Zn-dependent exopeptidases"/>
    <property type="match status" value="1"/>
</dbReference>
<dbReference type="PROSITE" id="PS00631">
    <property type="entry name" value="CYTOSOL_AP"/>
    <property type="match status" value="1"/>
</dbReference>
<reference key="1">
    <citation type="submission" date="2008-10" db="EMBL/GenBank/DDBJ databases">
        <title>Genome sequence of Bacillus cereus B4264.</title>
        <authorList>
            <person name="Dodson R.J."/>
            <person name="Durkin A.S."/>
            <person name="Rosovitz M.J."/>
            <person name="Rasko D.A."/>
            <person name="Hoffmaster A."/>
            <person name="Ravel J."/>
            <person name="Sutton G."/>
        </authorList>
    </citation>
    <scope>NUCLEOTIDE SEQUENCE [LARGE SCALE GENOMIC DNA]</scope>
    <source>
        <strain>B4264</strain>
    </source>
</reference>
<protein>
    <recommendedName>
        <fullName evidence="1">Probable cytosol aminopeptidase</fullName>
        <ecNumber evidence="1">3.4.11.1</ecNumber>
    </recommendedName>
    <alternativeName>
        <fullName evidence="1">Leucine aminopeptidase</fullName>
        <shortName evidence="1">LAP</shortName>
        <ecNumber evidence="1">3.4.11.10</ecNumber>
    </alternativeName>
    <alternativeName>
        <fullName evidence="1">Leucyl aminopeptidase</fullName>
    </alternativeName>
</protein>
<feature type="chain" id="PRO_1000118448" description="Probable cytosol aminopeptidase">
    <location>
        <begin position="1"/>
        <end position="494"/>
    </location>
</feature>
<feature type="active site" evidence="1">
    <location>
        <position position="272"/>
    </location>
</feature>
<feature type="active site" evidence="1">
    <location>
        <position position="346"/>
    </location>
</feature>
<feature type="binding site" evidence="1">
    <location>
        <position position="260"/>
    </location>
    <ligand>
        <name>Mn(2+)</name>
        <dbReference type="ChEBI" id="CHEBI:29035"/>
        <label>2</label>
    </ligand>
</feature>
<feature type="binding site" evidence="1">
    <location>
        <position position="265"/>
    </location>
    <ligand>
        <name>Mn(2+)</name>
        <dbReference type="ChEBI" id="CHEBI:29035"/>
        <label>1</label>
    </ligand>
</feature>
<feature type="binding site" evidence="1">
    <location>
        <position position="265"/>
    </location>
    <ligand>
        <name>Mn(2+)</name>
        <dbReference type="ChEBI" id="CHEBI:29035"/>
        <label>2</label>
    </ligand>
</feature>
<feature type="binding site" evidence="1">
    <location>
        <position position="283"/>
    </location>
    <ligand>
        <name>Mn(2+)</name>
        <dbReference type="ChEBI" id="CHEBI:29035"/>
        <label>2</label>
    </ligand>
</feature>
<feature type="binding site" evidence="1">
    <location>
        <position position="342"/>
    </location>
    <ligand>
        <name>Mn(2+)</name>
        <dbReference type="ChEBI" id="CHEBI:29035"/>
        <label>1</label>
    </ligand>
</feature>
<feature type="binding site" evidence="1">
    <location>
        <position position="344"/>
    </location>
    <ligand>
        <name>Mn(2+)</name>
        <dbReference type="ChEBI" id="CHEBI:29035"/>
        <label>1</label>
    </ligand>
</feature>
<feature type="binding site" evidence="1">
    <location>
        <position position="344"/>
    </location>
    <ligand>
        <name>Mn(2+)</name>
        <dbReference type="ChEBI" id="CHEBI:29035"/>
        <label>2</label>
    </ligand>
</feature>
<proteinExistence type="inferred from homology"/>
<organism>
    <name type="scientific">Bacillus cereus (strain B4264)</name>
    <dbReference type="NCBI Taxonomy" id="405532"/>
    <lineage>
        <taxon>Bacteria</taxon>
        <taxon>Bacillati</taxon>
        <taxon>Bacillota</taxon>
        <taxon>Bacilli</taxon>
        <taxon>Bacillales</taxon>
        <taxon>Bacillaceae</taxon>
        <taxon>Bacillus</taxon>
        <taxon>Bacillus cereus group</taxon>
    </lineage>
</organism>
<keyword id="KW-0031">Aminopeptidase</keyword>
<keyword id="KW-0963">Cytoplasm</keyword>
<keyword id="KW-0378">Hydrolase</keyword>
<keyword id="KW-0464">Manganese</keyword>
<keyword id="KW-0479">Metal-binding</keyword>
<keyword id="KW-0645">Protease</keyword>